<comment type="alternative products">
    <event type="alternative splicing"/>
    <isoform>
        <id>Q80TL4-1</id>
        <name>1</name>
        <sequence type="displayed"/>
    </isoform>
    <isoform>
        <id>Q80TL4-2</id>
        <name>2</name>
        <sequence type="described" ref="VSP_014952"/>
    </isoform>
</comment>
<comment type="sequence caution" evidence="6">
    <conflict type="erroneous initiation">
        <sequence resource="EMBL-CDS" id="BAC65710"/>
    </conflict>
</comment>
<keyword id="KW-0025">Alternative splicing</keyword>
<keyword id="KW-0449">Lipoprotein</keyword>
<keyword id="KW-0479">Metal-binding</keyword>
<keyword id="KW-0488">Methylation</keyword>
<keyword id="KW-0519">Myristate</keyword>
<keyword id="KW-0597">Phosphoprotein</keyword>
<keyword id="KW-1185">Reference proteome</keyword>
<keyword id="KW-0862">Zinc</keyword>
<keyword id="KW-0863">Zinc-finger</keyword>
<accession>Q80TL4</accession>
<accession>A2AG28</accession>
<accession>Q8BH08</accession>
<organism>
    <name type="scientific">Mus musculus</name>
    <name type="common">Mouse</name>
    <dbReference type="NCBI Taxonomy" id="10090"/>
    <lineage>
        <taxon>Eukaryota</taxon>
        <taxon>Metazoa</taxon>
        <taxon>Chordata</taxon>
        <taxon>Craniata</taxon>
        <taxon>Vertebrata</taxon>
        <taxon>Euteleostomi</taxon>
        <taxon>Mammalia</taxon>
        <taxon>Eutheria</taxon>
        <taxon>Euarchontoglires</taxon>
        <taxon>Glires</taxon>
        <taxon>Rodentia</taxon>
        <taxon>Myomorpha</taxon>
        <taxon>Muroidea</taxon>
        <taxon>Muridae</taxon>
        <taxon>Murinae</taxon>
        <taxon>Mus</taxon>
        <taxon>Mus</taxon>
    </lineage>
</organism>
<protein>
    <recommendedName>
        <fullName evidence="7">PHD finger protein 24</fullName>
    </recommendedName>
</protein>
<evidence type="ECO:0000250" key="1"/>
<evidence type="ECO:0000250" key="2">
    <source>
        <dbReference type="UniProtKB" id="Q9UPV7"/>
    </source>
</evidence>
<evidence type="ECO:0000256" key="3">
    <source>
        <dbReference type="SAM" id="MobiDB-lite"/>
    </source>
</evidence>
<evidence type="ECO:0000303" key="4">
    <source>
    </source>
</evidence>
<evidence type="ECO:0000303" key="5">
    <source>
    </source>
</evidence>
<evidence type="ECO:0000305" key="6"/>
<evidence type="ECO:0000312" key="7">
    <source>
        <dbReference type="MGI" id="MGI:2140712"/>
    </source>
</evidence>
<evidence type="ECO:0007744" key="8">
    <source>
    </source>
</evidence>
<evidence type="ECO:0007744" key="9">
    <source>
    </source>
</evidence>
<gene>
    <name evidence="7" type="primary">Phf24</name>
    <name evidence="7" type="synonym">Kiaa1045</name>
    <name evidence="7" type="synonym">N28178</name>
</gene>
<sequence length="400" mass="45223">MGVLMSKRQTVEQVQKVSLAVSAFKDGLRDRPSIRRGGELPGSRRGTVEGSVQEVQEEKEAEASAPVVQEESSINRAAWERLRDGRGVEPEEFDRTSRFTPPAFIRPTRKLDDDKPPDICLEPREPVVNDEMCDVCEVWTAESLFPCRVCTRVFHDGCLRRMGYLQGDSAVEVTEMAHTETGWSCYYCDNLNLLLTEEEMYSLTETFQRCKVIPDCSLTLEDFVRYRHQAAKRGESSRALTDEQEEQAARQFAALDPEQRGHVEWSDFLSHESLLLLLQLRPQNSLLRLLTVKERERARATFLARGRGSTISEAECHHARHSWFCKRLTEAPSCSVSISHVGPIADSSPAASSSKSQEKALLPTEQESRYVDWPTFLRENVIYILAARPNSGAIHLKPPG</sequence>
<name>PHF24_MOUSE</name>
<feature type="initiator methionine" description="Removed" evidence="2">
    <location>
        <position position="1"/>
    </location>
</feature>
<feature type="chain" id="PRO_0000059332" description="PHD finger protein 24">
    <location>
        <begin position="2"/>
        <end position="400"/>
    </location>
</feature>
<feature type="zinc finger region" description="PHD-type">
    <location>
        <begin position="129"/>
        <end position="190"/>
    </location>
</feature>
<feature type="region of interest" description="Disordered" evidence="3">
    <location>
        <begin position="29"/>
        <end position="65"/>
    </location>
</feature>
<feature type="compositionally biased region" description="Basic and acidic residues" evidence="3">
    <location>
        <begin position="29"/>
        <end position="38"/>
    </location>
</feature>
<feature type="modified residue" description="Omega-N-methylarginine" evidence="9">
    <location>
        <position position="36"/>
    </location>
</feature>
<feature type="modified residue" description="Phosphoserine" evidence="2">
    <location>
        <position position="43"/>
    </location>
</feature>
<feature type="modified residue" description="Phosphothreonine" evidence="8">
    <location>
        <position position="47"/>
    </location>
</feature>
<feature type="modified residue" description="Phosphoserine" evidence="8">
    <location>
        <position position="51"/>
    </location>
</feature>
<feature type="modified residue" description="Omega-N-methylarginine" evidence="9">
    <location>
        <position position="307"/>
    </location>
</feature>
<feature type="lipid moiety-binding region" description="N-myristoyl glycine" evidence="1">
    <location>
        <position position="2"/>
    </location>
</feature>
<feature type="splice variant" id="VSP_014952" description="In isoform 2." evidence="4 5">
    <location>
        <begin position="17"/>
        <end position="53"/>
    </location>
</feature>
<dbReference type="EMBL" id="AK122428">
    <property type="protein sequence ID" value="BAC65710.1"/>
    <property type="status" value="ALT_INIT"/>
    <property type="molecule type" value="mRNA"/>
</dbReference>
<dbReference type="EMBL" id="AK038528">
    <property type="protein sequence ID" value="BAC30029.1"/>
    <property type="molecule type" value="mRNA"/>
</dbReference>
<dbReference type="EMBL" id="AK046283">
    <property type="protein sequence ID" value="BAC32670.1"/>
    <property type="molecule type" value="mRNA"/>
</dbReference>
<dbReference type="EMBL" id="AL672276">
    <property type="status" value="NOT_ANNOTATED_CDS"/>
    <property type="molecule type" value="Genomic_DNA"/>
</dbReference>
<dbReference type="EMBL" id="BC057092">
    <property type="protein sequence ID" value="AAH57092.1"/>
    <property type="molecule type" value="mRNA"/>
</dbReference>
<dbReference type="CCDS" id="CCDS18083.1">
    <molecule id="Q80TL4-2"/>
</dbReference>
<dbReference type="CCDS" id="CCDS84719.1">
    <molecule id="Q80TL4-1"/>
</dbReference>
<dbReference type="RefSeq" id="NP_001333455.1">
    <molecule id="Q80TL4-1"/>
    <property type="nucleotide sequence ID" value="NM_001346526.1"/>
</dbReference>
<dbReference type="RefSeq" id="NP_001342622.1">
    <molecule id="Q80TL4-1"/>
    <property type="nucleotide sequence ID" value="NM_001355693.1"/>
</dbReference>
<dbReference type="RefSeq" id="NP_001342623.1">
    <molecule id="Q80TL4-1"/>
    <property type="nucleotide sequence ID" value="NM_001355694.1"/>
</dbReference>
<dbReference type="RefSeq" id="NP_001342624.1">
    <molecule id="Q80TL4-2"/>
    <property type="nucleotide sequence ID" value="NM_001355695.1"/>
</dbReference>
<dbReference type="RefSeq" id="NP_001361039.1">
    <molecule id="Q80TL4-1"/>
    <property type="nucleotide sequence ID" value="NM_001374110.1"/>
</dbReference>
<dbReference type="RefSeq" id="NP_766278.1">
    <molecule id="Q80TL4-2"/>
    <property type="nucleotide sequence ID" value="NM_172690.3"/>
</dbReference>
<dbReference type="RefSeq" id="XP_006537878.1">
    <property type="nucleotide sequence ID" value="XM_006537815.3"/>
</dbReference>
<dbReference type="RefSeq" id="XP_006537880.1">
    <property type="nucleotide sequence ID" value="XM_006537817.2"/>
</dbReference>
<dbReference type="RefSeq" id="XP_006537882.1">
    <molecule id="Q80TL4-2"/>
    <property type="nucleotide sequence ID" value="XM_006537819.4"/>
</dbReference>
<dbReference type="RefSeq" id="XP_006537884.1">
    <property type="nucleotide sequence ID" value="XM_006537821.1"/>
</dbReference>
<dbReference type="RefSeq" id="XP_011248294.1">
    <property type="nucleotide sequence ID" value="XM_011249992.2"/>
</dbReference>
<dbReference type="RefSeq" id="XP_017175610.1">
    <property type="nucleotide sequence ID" value="XM_017320121.1"/>
</dbReference>
<dbReference type="RefSeq" id="XP_017175611.1">
    <property type="nucleotide sequence ID" value="XM_017320122.1"/>
</dbReference>
<dbReference type="RefSeq" id="XP_017175613.1">
    <molecule id="Q80TL4-2"/>
    <property type="nucleotide sequence ID" value="XM_017320124.3"/>
</dbReference>
<dbReference type="RefSeq" id="XP_030109268.1">
    <molecule id="Q80TL4-1"/>
    <property type="nucleotide sequence ID" value="XM_030253408.2"/>
</dbReference>
<dbReference type="RefSeq" id="XP_030109269.1">
    <molecule id="Q80TL4-1"/>
    <property type="nucleotide sequence ID" value="XM_030253409.2"/>
</dbReference>
<dbReference type="RefSeq" id="XP_030109270.1">
    <molecule id="Q80TL4-2"/>
    <property type="nucleotide sequence ID" value="XM_030253410.2"/>
</dbReference>
<dbReference type="BioGRID" id="230929">
    <property type="interactions" value="1"/>
</dbReference>
<dbReference type="FunCoup" id="Q80TL4">
    <property type="interactions" value="483"/>
</dbReference>
<dbReference type="STRING" id="10090.ENSMUSP00000103609"/>
<dbReference type="GlyGen" id="Q80TL4">
    <property type="glycosylation" value="2 sites, 1 O-linked glycan (2 sites)"/>
</dbReference>
<dbReference type="iPTMnet" id="Q80TL4"/>
<dbReference type="PhosphoSitePlus" id="Q80TL4"/>
<dbReference type="SwissPalm" id="Q80TL4"/>
<dbReference type="PaxDb" id="10090-ENSMUSP00000103610"/>
<dbReference type="PeptideAtlas" id="Q80TL4"/>
<dbReference type="ProteomicsDB" id="301811">
    <molecule id="Q80TL4-1"/>
</dbReference>
<dbReference type="ProteomicsDB" id="301812">
    <molecule id="Q80TL4-2"/>
</dbReference>
<dbReference type="Antibodypedia" id="5591">
    <property type="antibodies" value="20 antibodies from 11 providers"/>
</dbReference>
<dbReference type="Ensembl" id="ENSMUST00000069184.9">
    <molecule id="Q80TL4-2"/>
    <property type="protein sequence ID" value="ENSMUSP00000071011.3"/>
    <property type="gene ID" value="ENSMUSG00000036062.14"/>
</dbReference>
<dbReference type="Ensembl" id="ENSMUST00000107975.8">
    <molecule id="Q80TL4-1"/>
    <property type="protein sequence ID" value="ENSMUSP00000103609.2"/>
    <property type="gene ID" value="ENSMUSG00000036062.14"/>
</dbReference>
<dbReference type="Ensembl" id="ENSMUST00000107976.9">
    <molecule id="Q80TL4-2"/>
    <property type="protein sequence ID" value="ENSMUSP00000103610.3"/>
    <property type="gene ID" value="ENSMUSG00000036062.14"/>
</dbReference>
<dbReference type="GeneID" id="230085"/>
<dbReference type="KEGG" id="mmu:230085"/>
<dbReference type="UCSC" id="uc008soi.1">
    <molecule id="Q80TL4-1"/>
    <property type="organism name" value="mouse"/>
</dbReference>
<dbReference type="UCSC" id="uc008soj.1">
    <molecule id="Q80TL4-2"/>
    <property type="organism name" value="mouse"/>
</dbReference>
<dbReference type="AGR" id="MGI:2140712"/>
<dbReference type="CTD" id="23349"/>
<dbReference type="MGI" id="MGI:2140712">
    <property type="gene designation" value="Phf24"/>
</dbReference>
<dbReference type="VEuPathDB" id="HostDB:ENSMUSG00000036062"/>
<dbReference type="eggNOG" id="ENOG502QT6N">
    <property type="taxonomic scope" value="Eukaryota"/>
</dbReference>
<dbReference type="GeneTree" id="ENSGT00390000002865"/>
<dbReference type="HOGENOM" id="CLU_057701_1_0_1"/>
<dbReference type="InParanoid" id="Q80TL4"/>
<dbReference type="OMA" id="KGHIEWQ"/>
<dbReference type="OrthoDB" id="9978298at2759"/>
<dbReference type="PhylomeDB" id="Q80TL4"/>
<dbReference type="TreeFam" id="TF333336"/>
<dbReference type="BioGRID-ORCS" id="230085">
    <property type="hits" value="1 hit in 26 CRISPR screens"/>
</dbReference>
<dbReference type="ChiTaRS" id="Phf24">
    <property type="organism name" value="mouse"/>
</dbReference>
<dbReference type="PRO" id="PR:Q80TL4"/>
<dbReference type="Proteomes" id="UP000000589">
    <property type="component" value="Chromosome 4"/>
</dbReference>
<dbReference type="RNAct" id="Q80TL4">
    <property type="molecule type" value="protein"/>
</dbReference>
<dbReference type="Bgee" id="ENSMUSG00000036062">
    <property type="expression patterns" value="Expressed in lumbar dorsal root ganglion and 130 other cell types or tissues"/>
</dbReference>
<dbReference type="ExpressionAtlas" id="Q80TL4">
    <property type="expression patterns" value="baseline and differential"/>
</dbReference>
<dbReference type="GO" id="GO:0098978">
    <property type="term" value="C:glutamatergic synapse"/>
    <property type="evidence" value="ECO:0000314"/>
    <property type="project" value="SynGO"/>
</dbReference>
<dbReference type="GO" id="GO:0030672">
    <property type="term" value="C:synaptic vesicle membrane"/>
    <property type="evidence" value="ECO:0000314"/>
    <property type="project" value="SynGO"/>
</dbReference>
<dbReference type="GO" id="GO:0008270">
    <property type="term" value="F:zinc ion binding"/>
    <property type="evidence" value="ECO:0007669"/>
    <property type="project" value="UniProtKB-KW"/>
</dbReference>
<dbReference type="GO" id="GO:0050966">
    <property type="term" value="P:detection of mechanical stimulus involved in sensory perception of pain"/>
    <property type="evidence" value="ECO:0000315"/>
    <property type="project" value="MGI"/>
</dbReference>
<dbReference type="GO" id="GO:0007214">
    <property type="term" value="P:gamma-aminobutyric acid signaling pathway"/>
    <property type="evidence" value="ECO:0000315"/>
    <property type="project" value="MGI"/>
</dbReference>
<dbReference type="GO" id="GO:0008277">
    <property type="term" value="P:regulation of G protein-coupled receptor signaling pathway"/>
    <property type="evidence" value="ECO:0000315"/>
    <property type="project" value="MGI"/>
</dbReference>
<dbReference type="GO" id="GO:0032228">
    <property type="term" value="P:regulation of synaptic transmission, GABAergic"/>
    <property type="evidence" value="ECO:0000315"/>
    <property type="project" value="MGI"/>
</dbReference>
<dbReference type="Gene3D" id="3.30.40.10">
    <property type="entry name" value="Zinc/RING finger domain, C3HC4 (zinc finger)"/>
    <property type="match status" value="1"/>
</dbReference>
<dbReference type="InterPro" id="IPR011992">
    <property type="entry name" value="EF-hand-dom_pair"/>
</dbReference>
<dbReference type="InterPro" id="IPR031946">
    <property type="entry name" value="KIAA1045_Zf_RING"/>
</dbReference>
<dbReference type="InterPro" id="IPR011011">
    <property type="entry name" value="Znf_FYVE_PHD"/>
</dbReference>
<dbReference type="InterPro" id="IPR013083">
    <property type="entry name" value="Znf_RING/FYVE/PHD"/>
</dbReference>
<dbReference type="PANTHER" id="PTHR46453:SF4">
    <property type="entry name" value="PHD FINGER PROTEIN 24"/>
    <property type="match status" value="1"/>
</dbReference>
<dbReference type="PANTHER" id="PTHR46453">
    <property type="entry name" value="PROTEIN KINASE C-BINDING PROTEIN 1"/>
    <property type="match status" value="1"/>
</dbReference>
<dbReference type="Pfam" id="PF16744">
    <property type="entry name" value="zf-RING_15"/>
    <property type="match status" value="1"/>
</dbReference>
<dbReference type="SUPFAM" id="SSF47473">
    <property type="entry name" value="EF-hand"/>
    <property type="match status" value="1"/>
</dbReference>
<dbReference type="SUPFAM" id="SSF57903">
    <property type="entry name" value="FYVE/PHD zinc finger"/>
    <property type="match status" value="1"/>
</dbReference>
<dbReference type="PROSITE" id="PS01359">
    <property type="entry name" value="ZF_PHD_1"/>
    <property type="match status" value="1"/>
</dbReference>
<reference key="1">
    <citation type="journal article" date="2003" name="DNA Res.">
        <title>Prediction of the coding sequences of mouse homologues of KIAA gene: II. The complete nucleotide sequences of 400 mouse KIAA-homologous cDNAs identified by screening of terminal sequences of cDNA clones randomly sampled from size-fractionated libraries.</title>
        <authorList>
            <person name="Okazaki N."/>
            <person name="Kikuno R."/>
            <person name="Ohara R."/>
            <person name="Inamoto S."/>
            <person name="Aizawa H."/>
            <person name="Yuasa S."/>
            <person name="Nakajima D."/>
            <person name="Nagase T."/>
            <person name="Ohara O."/>
            <person name="Koga H."/>
        </authorList>
    </citation>
    <scope>NUCLEOTIDE SEQUENCE [LARGE SCALE MRNA] (ISOFORM 1)</scope>
    <source>
        <tissue>Brain</tissue>
    </source>
</reference>
<reference key="2">
    <citation type="journal article" date="2005" name="Science">
        <title>The transcriptional landscape of the mammalian genome.</title>
        <authorList>
            <person name="Carninci P."/>
            <person name="Kasukawa T."/>
            <person name="Katayama S."/>
            <person name="Gough J."/>
            <person name="Frith M.C."/>
            <person name="Maeda N."/>
            <person name="Oyama R."/>
            <person name="Ravasi T."/>
            <person name="Lenhard B."/>
            <person name="Wells C."/>
            <person name="Kodzius R."/>
            <person name="Shimokawa K."/>
            <person name="Bajic V.B."/>
            <person name="Brenner S.E."/>
            <person name="Batalov S."/>
            <person name="Forrest A.R."/>
            <person name="Zavolan M."/>
            <person name="Davis M.J."/>
            <person name="Wilming L.G."/>
            <person name="Aidinis V."/>
            <person name="Allen J.E."/>
            <person name="Ambesi-Impiombato A."/>
            <person name="Apweiler R."/>
            <person name="Aturaliya R.N."/>
            <person name="Bailey T.L."/>
            <person name="Bansal M."/>
            <person name="Baxter L."/>
            <person name="Beisel K.W."/>
            <person name="Bersano T."/>
            <person name="Bono H."/>
            <person name="Chalk A.M."/>
            <person name="Chiu K.P."/>
            <person name="Choudhary V."/>
            <person name="Christoffels A."/>
            <person name="Clutterbuck D.R."/>
            <person name="Crowe M.L."/>
            <person name="Dalla E."/>
            <person name="Dalrymple B.P."/>
            <person name="de Bono B."/>
            <person name="Della Gatta G."/>
            <person name="di Bernardo D."/>
            <person name="Down T."/>
            <person name="Engstrom P."/>
            <person name="Fagiolini M."/>
            <person name="Faulkner G."/>
            <person name="Fletcher C.F."/>
            <person name="Fukushima T."/>
            <person name="Furuno M."/>
            <person name="Futaki S."/>
            <person name="Gariboldi M."/>
            <person name="Georgii-Hemming P."/>
            <person name="Gingeras T.R."/>
            <person name="Gojobori T."/>
            <person name="Green R.E."/>
            <person name="Gustincich S."/>
            <person name="Harbers M."/>
            <person name="Hayashi Y."/>
            <person name="Hensch T.K."/>
            <person name="Hirokawa N."/>
            <person name="Hill D."/>
            <person name="Huminiecki L."/>
            <person name="Iacono M."/>
            <person name="Ikeo K."/>
            <person name="Iwama A."/>
            <person name="Ishikawa T."/>
            <person name="Jakt M."/>
            <person name="Kanapin A."/>
            <person name="Katoh M."/>
            <person name="Kawasawa Y."/>
            <person name="Kelso J."/>
            <person name="Kitamura H."/>
            <person name="Kitano H."/>
            <person name="Kollias G."/>
            <person name="Krishnan S.P."/>
            <person name="Kruger A."/>
            <person name="Kummerfeld S.K."/>
            <person name="Kurochkin I.V."/>
            <person name="Lareau L.F."/>
            <person name="Lazarevic D."/>
            <person name="Lipovich L."/>
            <person name="Liu J."/>
            <person name="Liuni S."/>
            <person name="McWilliam S."/>
            <person name="Madan Babu M."/>
            <person name="Madera M."/>
            <person name="Marchionni L."/>
            <person name="Matsuda H."/>
            <person name="Matsuzawa S."/>
            <person name="Miki H."/>
            <person name="Mignone F."/>
            <person name="Miyake S."/>
            <person name="Morris K."/>
            <person name="Mottagui-Tabar S."/>
            <person name="Mulder N."/>
            <person name="Nakano N."/>
            <person name="Nakauchi H."/>
            <person name="Ng P."/>
            <person name="Nilsson R."/>
            <person name="Nishiguchi S."/>
            <person name="Nishikawa S."/>
            <person name="Nori F."/>
            <person name="Ohara O."/>
            <person name="Okazaki Y."/>
            <person name="Orlando V."/>
            <person name="Pang K.C."/>
            <person name="Pavan W.J."/>
            <person name="Pavesi G."/>
            <person name="Pesole G."/>
            <person name="Petrovsky N."/>
            <person name="Piazza S."/>
            <person name="Reed J."/>
            <person name="Reid J.F."/>
            <person name="Ring B.Z."/>
            <person name="Ringwald M."/>
            <person name="Rost B."/>
            <person name="Ruan Y."/>
            <person name="Salzberg S.L."/>
            <person name="Sandelin A."/>
            <person name="Schneider C."/>
            <person name="Schoenbach C."/>
            <person name="Sekiguchi K."/>
            <person name="Semple C.A."/>
            <person name="Seno S."/>
            <person name="Sessa L."/>
            <person name="Sheng Y."/>
            <person name="Shibata Y."/>
            <person name="Shimada H."/>
            <person name="Shimada K."/>
            <person name="Silva D."/>
            <person name="Sinclair B."/>
            <person name="Sperling S."/>
            <person name="Stupka E."/>
            <person name="Sugiura K."/>
            <person name="Sultana R."/>
            <person name="Takenaka Y."/>
            <person name="Taki K."/>
            <person name="Tammoja K."/>
            <person name="Tan S.L."/>
            <person name="Tang S."/>
            <person name="Taylor M.S."/>
            <person name="Tegner J."/>
            <person name="Teichmann S.A."/>
            <person name="Ueda H.R."/>
            <person name="van Nimwegen E."/>
            <person name="Verardo R."/>
            <person name="Wei C.L."/>
            <person name="Yagi K."/>
            <person name="Yamanishi H."/>
            <person name="Zabarovsky E."/>
            <person name="Zhu S."/>
            <person name="Zimmer A."/>
            <person name="Hide W."/>
            <person name="Bult C."/>
            <person name="Grimmond S.M."/>
            <person name="Teasdale R.D."/>
            <person name="Liu E.T."/>
            <person name="Brusic V."/>
            <person name="Quackenbush J."/>
            <person name="Wahlestedt C."/>
            <person name="Mattick J.S."/>
            <person name="Hume D.A."/>
            <person name="Kai C."/>
            <person name="Sasaki D."/>
            <person name="Tomaru Y."/>
            <person name="Fukuda S."/>
            <person name="Kanamori-Katayama M."/>
            <person name="Suzuki M."/>
            <person name="Aoki J."/>
            <person name="Arakawa T."/>
            <person name="Iida J."/>
            <person name="Imamura K."/>
            <person name="Itoh M."/>
            <person name="Kato T."/>
            <person name="Kawaji H."/>
            <person name="Kawagashira N."/>
            <person name="Kawashima T."/>
            <person name="Kojima M."/>
            <person name="Kondo S."/>
            <person name="Konno H."/>
            <person name="Nakano K."/>
            <person name="Ninomiya N."/>
            <person name="Nishio T."/>
            <person name="Okada M."/>
            <person name="Plessy C."/>
            <person name="Shibata K."/>
            <person name="Shiraki T."/>
            <person name="Suzuki S."/>
            <person name="Tagami M."/>
            <person name="Waki K."/>
            <person name="Watahiki A."/>
            <person name="Okamura-Oho Y."/>
            <person name="Suzuki H."/>
            <person name="Kawai J."/>
            <person name="Hayashizaki Y."/>
        </authorList>
    </citation>
    <scope>NUCLEOTIDE SEQUENCE [LARGE SCALE MRNA] (ISOFORM 2)</scope>
    <source>
        <strain>C57BL/6J</strain>
        <tissue>Hypothalamus</tissue>
    </source>
</reference>
<reference key="3">
    <citation type="journal article" date="2009" name="PLoS Biol.">
        <title>Lineage-specific biology revealed by a finished genome assembly of the mouse.</title>
        <authorList>
            <person name="Church D.M."/>
            <person name="Goodstadt L."/>
            <person name="Hillier L.W."/>
            <person name="Zody M.C."/>
            <person name="Goldstein S."/>
            <person name="She X."/>
            <person name="Bult C.J."/>
            <person name="Agarwala R."/>
            <person name="Cherry J.L."/>
            <person name="DiCuccio M."/>
            <person name="Hlavina W."/>
            <person name="Kapustin Y."/>
            <person name="Meric P."/>
            <person name="Maglott D."/>
            <person name="Birtle Z."/>
            <person name="Marques A.C."/>
            <person name="Graves T."/>
            <person name="Zhou S."/>
            <person name="Teague B."/>
            <person name="Potamousis K."/>
            <person name="Churas C."/>
            <person name="Place M."/>
            <person name="Herschleb J."/>
            <person name="Runnheim R."/>
            <person name="Forrest D."/>
            <person name="Amos-Landgraf J."/>
            <person name="Schwartz D.C."/>
            <person name="Cheng Z."/>
            <person name="Lindblad-Toh K."/>
            <person name="Eichler E.E."/>
            <person name="Ponting C.P."/>
        </authorList>
    </citation>
    <scope>NUCLEOTIDE SEQUENCE [LARGE SCALE GENOMIC DNA]</scope>
    <source>
        <strain>C57BL/6J</strain>
    </source>
</reference>
<reference key="4">
    <citation type="journal article" date="2004" name="Genome Res.">
        <title>The status, quality, and expansion of the NIH full-length cDNA project: the Mammalian Gene Collection (MGC).</title>
        <authorList>
            <consortium name="The MGC Project Team"/>
        </authorList>
    </citation>
    <scope>NUCLEOTIDE SEQUENCE [LARGE SCALE MRNA] (ISOFORM 2)</scope>
    <source>
        <strain>C57BL/6J</strain>
        <tissue>Brain</tissue>
    </source>
</reference>
<reference key="5">
    <citation type="journal article" date="2010" name="Cell">
        <title>A tissue-specific atlas of mouse protein phosphorylation and expression.</title>
        <authorList>
            <person name="Huttlin E.L."/>
            <person name="Jedrychowski M.P."/>
            <person name="Elias J.E."/>
            <person name="Goswami T."/>
            <person name="Rad R."/>
            <person name="Beausoleil S.A."/>
            <person name="Villen J."/>
            <person name="Haas W."/>
            <person name="Sowa M.E."/>
            <person name="Gygi S.P."/>
        </authorList>
    </citation>
    <scope>PHOSPHORYLATION [LARGE SCALE ANALYSIS] AT THR-47 AND SER-51</scope>
    <scope>IDENTIFICATION BY MASS SPECTROMETRY [LARGE SCALE ANALYSIS]</scope>
    <source>
        <tissue>Brain</tissue>
    </source>
</reference>
<reference key="6">
    <citation type="journal article" date="2014" name="Mol. Cell. Proteomics">
        <title>Immunoaffinity enrichment and mass spectrometry analysis of protein methylation.</title>
        <authorList>
            <person name="Guo A."/>
            <person name="Gu H."/>
            <person name="Zhou J."/>
            <person name="Mulhern D."/>
            <person name="Wang Y."/>
            <person name="Lee K.A."/>
            <person name="Yang V."/>
            <person name="Aguiar M."/>
            <person name="Kornhauser J."/>
            <person name="Jia X."/>
            <person name="Ren J."/>
            <person name="Beausoleil S.A."/>
            <person name="Silva J.C."/>
            <person name="Vemulapalli V."/>
            <person name="Bedford M.T."/>
            <person name="Comb M.J."/>
        </authorList>
    </citation>
    <scope>METHYLATION [LARGE SCALE ANALYSIS] AT ARG-36 AND ARG-307</scope>
    <scope>IDENTIFICATION BY MASS SPECTROMETRY [LARGE SCALE ANALYSIS]</scope>
    <source>
        <tissue>Brain</tissue>
    </source>
</reference>
<proteinExistence type="evidence at protein level"/>